<proteinExistence type="evidence at protein level"/>
<accession>Q9XYF4</accession>
<sequence length="450" mass="51141">MQPPELEIGMPKRHREHIRKNLNILVEWTNYERLAMECVQQGILTVQMLRNTQDLNGKPFNMDEKDVRVEQHRRLLLKITQRGPTAYNLLINALRNINCLDAAVLLESVDESDSRPPFISLNERRTSRKSADIVDTPSPEASEGPCVSKLRNEPLGALTPYVGVVDGPEVKKSKKIHGGDSAILGTYKMQSRFNRGVLLMVNIMDYPDQNRRRIGAEKDSKSLIHLFQELNFTIFPYGNVNQDQFFKLLTMVTSSSYVQNTECFVMVLMTHGNSVEGKEKVEFCDGSVVDMQKIKDHFQTAKCPYLVNKPKVLMFPFCRGDEYDLGHPKNQGNLMEPVYTAQEEKWPDTQTEGIPSPSTNVPSLADTLVCYANTPGYVTHRDLDTGSWYIQKFCQVMADHAHDTDLEDILKKTSEAVGNKRTKKGSMQTGAYDNLGFNKKLYFNPGFFNE</sequence>
<organism evidence="22">
    <name type="scientific">Drosophila melanogaster</name>
    <name type="common">Fruit fly</name>
    <dbReference type="NCBI Taxonomy" id="7227"/>
    <lineage>
        <taxon>Eukaryota</taxon>
        <taxon>Metazoa</taxon>
        <taxon>Ecdysozoa</taxon>
        <taxon>Arthropoda</taxon>
        <taxon>Hexapoda</taxon>
        <taxon>Insecta</taxon>
        <taxon>Pterygota</taxon>
        <taxon>Neoptera</taxon>
        <taxon>Endopterygota</taxon>
        <taxon>Diptera</taxon>
        <taxon>Brachycera</taxon>
        <taxon>Muscomorpha</taxon>
        <taxon>Ephydroidea</taxon>
        <taxon>Drosophilidae</taxon>
        <taxon>Drosophila</taxon>
        <taxon>Sophophora</taxon>
    </lineage>
</organism>
<comment type="function">
    <text evidence="4 5 7 10 11 12">Involved in the activation cascade of caspases responsible for apoptosis execution (PubMed:10200258, PubMed:10675329, PubMed:10984473). Effector of steroid-mediated apoptosis during insect metamorphosis (PubMed:10984473). Overexpression promotes programmed cell death (PubMed:10200258, PubMed:10675329, PubMed:10984473). Interaction with Diap1 is required to suppress Dronc-mediated cell death; via Diap1-mediated ubiquitination of Dronc (PubMed:10675329, PubMed:14517550). Rate-limiting caspase in rpr, grim and hid death pathway (PubMed:10984473, PubMed:14517550). Recruited to the Dark apoptosome, an adapter protein complex that mediates activation of the caspase cascade in programmed cell death initiated by the intrinsic apoptosis pathway (PubMed:21220123, PubMed:25644603). Association with the Dark apoptosome stimulates autocatalytic cleavage and activation of Dronc, promoting Dronc-mediated cleavage of downstream effector caspases such as Drice (PubMed:21220123, PubMed:25644603).</text>
</comment>
<comment type="catalytic activity">
    <reaction evidence="11 12">
        <text>Strict requirement for an Asp residue at position P1 and with a marked preference for His at position P2. It has a preferred cleavage sequence of Leu-Gly-His-Asp-|-Xaa.</text>
        <dbReference type="EC" id="3.4.22.62"/>
    </reaction>
</comment>
<comment type="activity regulation">
    <text evidence="11 12 13">Zymogen activated by autocatalytic cleavage; association with the Dark apoptosome brings multiple molecules together to facilitate their dimerization and activation by autocatalytic cleavage.</text>
</comment>
<comment type="subunit">
    <text evidence="5 7 10 11 12 13">Interacts (via residues 114-125) with Diap1 (via BIR 2 domain); binding blocks Dronc-mediated cell death (PubMed:10675329, PubMed:10984473, PubMed:14517550). Can form a stable complex with Drice (PubMed:10675329, PubMed:14517550). Rpr, hid and grim can out-compete Dronc for binding Diap1, therefore removing Diap1-mediated ubiquitination (PubMed:10675329, PubMed:14517550). Interacts (via CARD domain) with Dark (via Dark CARD and WD domains); the interaction stimulates Dark oligomerization to form the apoptosome and brings pairs of Dronc molecules together on the apoptosome to facilitate their dimerization and activation by autocatalytic cleavage (PubMed:21220123, PubMed:25644603, PubMed:38381783). Binding to Dark stimulates apoptosome assembly (PubMed:25644603, PubMed:38381783). After autocatalytic cleavage the Dronc caspase domain dissociates from the apoptosome but the CARD domain remains associated (PubMed:25644603).</text>
</comment>
<comment type="interaction">
    <interactant intactId="EBI-108311">
        <id>Q9XYF4</id>
    </interactant>
    <interactant intactId="EBI-3404349">
        <id>Q7KLI1</id>
        <label>Dark</label>
    </interactant>
    <organismsDiffer>false</organismsDiffer>
    <experiments>3</experiments>
</comment>
<comment type="interaction">
    <interactant intactId="EBI-108311">
        <id>Q9XYF4</id>
    </interactant>
    <interactant intactId="EBI-456419">
        <id>Q24306</id>
        <label>Diap1</label>
    </interactant>
    <organismsDiffer>false</organismsDiffer>
    <experiments>9</experiments>
</comment>
<comment type="interaction">
    <interactant intactId="EBI-108311">
        <id>Q9XYF4</id>
    </interactant>
    <interactant intactId="EBI-91422">
        <id>O01382</id>
        <label>Drice</label>
    </interactant>
    <organismsDiffer>false</organismsDiffer>
    <experiments>3</experiments>
</comment>
<comment type="subcellular location">
    <subcellularLocation>
        <location evidence="1">Cytoplasm</location>
    </subcellularLocation>
</comment>
<comment type="tissue specificity">
    <text evidence="4">Ubiquitously expressed in embryos during early stages of development. In late third instar larvae, dramatic up-regulation in salivary glands and midgut before histolysis of these tissues.</text>
</comment>
<comment type="developmental stage">
    <text evidence="4">Expressed both maternally and zygotically.</text>
</comment>
<comment type="induction">
    <text evidence="4">By ecdysone; exposure of salivary glands and midgut isolated from second instar larvae results in a massive increase in levels.</text>
</comment>
<comment type="PTM">
    <text evidence="8">Ubiquitinated by Diap1, leading to its subsequent degradation.</text>
</comment>
<comment type="miscellaneous">
    <text evidence="5">The promiscuous caspase inhibitor p35 is neither cleaved by Dronc in vitro nor blocks Dronc activity in vivo.</text>
</comment>
<comment type="similarity">
    <text evidence="15">Belongs to the peptidase C14A family.</text>
</comment>
<protein>
    <recommendedName>
        <fullName evidence="15">Caspase Dronc</fullName>
        <ecNumber evidence="11 12">3.4.22.62</ecNumber>
    </recommendedName>
    <alternativeName>
        <fullName evidence="21">Death regulator NEDD2-like caspase</fullName>
    </alternativeName>
    <component>
        <recommendedName>
            <fullName>Caspase Nc subunit 1</fullName>
        </recommendedName>
    </component>
    <component>
        <recommendedName>
            <fullName>Caspase Nc subunit 2</fullName>
        </recommendedName>
    </component>
</protein>
<keyword id="KW-0002">3D-structure</keyword>
<keyword id="KW-0053">Apoptosis</keyword>
<keyword id="KW-0963">Cytoplasm</keyword>
<keyword id="KW-0378">Hydrolase</keyword>
<keyword id="KW-0645">Protease</keyword>
<keyword id="KW-1185">Reference proteome</keyword>
<keyword id="KW-0788">Thiol protease</keyword>
<keyword id="KW-0832">Ubl conjugation</keyword>
<keyword id="KW-0865">Zymogen</keyword>
<name>DRONC_DROME</name>
<evidence type="ECO:0000250" key="1"/>
<evidence type="ECO:0000250" key="2">
    <source>
        <dbReference type="UniProtKB" id="P29466"/>
    </source>
</evidence>
<evidence type="ECO:0000255" key="3"/>
<evidence type="ECO:0000269" key="4">
    <source>
    </source>
</evidence>
<evidence type="ECO:0000269" key="5">
    <source>
    </source>
</evidence>
<evidence type="ECO:0000269" key="6">
    <source>
    </source>
</evidence>
<evidence type="ECO:0000269" key="7">
    <source>
    </source>
</evidence>
<evidence type="ECO:0000269" key="8">
    <source>
    </source>
</evidence>
<evidence type="ECO:0000269" key="9">
    <source>
    </source>
</evidence>
<evidence type="ECO:0000269" key="10">
    <source>
    </source>
</evidence>
<evidence type="ECO:0000269" key="11">
    <source>
    </source>
</evidence>
<evidence type="ECO:0000269" key="12">
    <source>
    </source>
</evidence>
<evidence type="ECO:0000269" key="13">
    <source>
    </source>
</evidence>
<evidence type="ECO:0000303" key="14">
    <source>
    </source>
</evidence>
<evidence type="ECO:0000305" key="15"/>
<evidence type="ECO:0000305" key="16">
    <source>
    </source>
</evidence>
<evidence type="ECO:0000312" key="17">
    <source>
        <dbReference type="EMBL" id="AAD26625.1"/>
    </source>
</evidence>
<evidence type="ECO:0000312" key="18">
    <source>
        <dbReference type="EMBL" id="AAF50180.1"/>
    </source>
</evidence>
<evidence type="ECO:0000312" key="19">
    <source>
        <dbReference type="EMBL" id="AAL13976.1"/>
    </source>
</evidence>
<evidence type="ECO:0000312" key="20">
    <source>
        <dbReference type="EMBL" id="CAB53565.1"/>
    </source>
</evidence>
<evidence type="ECO:0000312" key="21">
    <source>
        <dbReference type="FlyBase" id="FBgn0026404"/>
    </source>
</evidence>
<evidence type="ECO:0000312" key="22">
    <source>
        <dbReference type="Proteomes" id="UP000000803"/>
    </source>
</evidence>
<evidence type="ECO:0007744" key="23">
    <source>
        <dbReference type="PDB" id="1Q4Q"/>
    </source>
</evidence>
<evidence type="ECO:0007744" key="24">
    <source>
        <dbReference type="PDB" id="3J9K"/>
    </source>
</evidence>
<evidence type="ECO:0007829" key="25">
    <source>
        <dbReference type="PDB" id="2FP3"/>
    </source>
</evidence>
<feature type="propeptide" id="PRO_0000004670" evidence="14">
    <location>
        <begin position="1"/>
        <end position="134"/>
    </location>
</feature>
<feature type="chain" id="PRO_0000004671" description="Caspase Nc subunit 1">
    <location>
        <begin position="135"/>
        <end position="320"/>
    </location>
</feature>
<feature type="propeptide" id="PRO_0000004672" evidence="14">
    <location>
        <begin position="321"/>
        <end position="324"/>
    </location>
</feature>
<feature type="chain" id="PRO_0000004673" description="Caspase Nc subunit 2">
    <location>
        <begin position="325"/>
        <end position="450"/>
    </location>
</feature>
<feature type="domain" description="CARD" evidence="3">
    <location>
        <begin position="64"/>
        <end position="109"/>
    </location>
</feature>
<feature type="region of interest" description="Required for binding Diap1" evidence="10">
    <location>
        <begin position="114"/>
        <end position="125"/>
    </location>
</feature>
<feature type="active site" evidence="2">
    <location>
        <position position="271"/>
    </location>
</feature>
<feature type="active site" evidence="2 16">
    <location>
        <position position="318"/>
    </location>
</feature>
<feature type="mutagenesis site" description="Does not disrupt interaction with Dark but fails to induce assembly of the Dark apoptosome complex." evidence="12">
    <original>LNGKPFNMDEKDV</original>
    <variation>AGSGS</variation>
    <location>
        <begin position="55"/>
        <end position="67"/>
    </location>
</feature>
<feature type="mutagenesis site" description="Abrogates interaction with Dark and disrupts Dark-mediated autocatalytic activation of Dronc." evidence="12">
    <original>QR</original>
    <variation>AA</variation>
    <location>
        <begin position="81"/>
        <end position="82"/>
    </location>
</feature>
<feature type="mutagenesis site" description="Disrupts interaction with Diap1." evidence="10">
    <original>F</original>
    <variation>E</variation>
    <location>
        <position position="118"/>
    </location>
</feature>
<feature type="mutagenesis site" description="Fails to induce apoptosis." evidence="7">
    <original>C</original>
    <variation>G</variation>
    <location>
        <position position="318"/>
    </location>
</feature>
<feature type="strand" evidence="25">
    <location>
        <begin position="195"/>
        <end position="202"/>
    </location>
</feature>
<feature type="helix" evidence="25">
    <location>
        <begin position="216"/>
        <end position="229"/>
    </location>
</feature>
<feature type="strand" evidence="25">
    <location>
        <begin position="232"/>
        <end position="237"/>
    </location>
</feature>
<feature type="helix" evidence="25">
    <location>
        <begin position="242"/>
        <end position="253"/>
    </location>
</feature>
<feature type="helix" evidence="25">
    <location>
        <begin position="256"/>
        <end position="260"/>
    </location>
</feature>
<feature type="strand" evidence="25">
    <location>
        <begin position="264"/>
        <end position="270"/>
    </location>
</feature>
<feature type="strand" evidence="25">
    <location>
        <begin position="280"/>
        <end position="282"/>
    </location>
</feature>
<feature type="strand" evidence="25">
    <location>
        <begin position="288"/>
        <end position="290"/>
    </location>
</feature>
<feature type="helix" evidence="25">
    <location>
        <begin position="291"/>
        <end position="296"/>
    </location>
</feature>
<feature type="turn" evidence="25">
    <location>
        <begin position="300"/>
        <end position="302"/>
    </location>
</feature>
<feature type="helix" evidence="25">
    <location>
        <begin position="304"/>
        <end position="306"/>
    </location>
</feature>
<feature type="strand" evidence="25">
    <location>
        <begin position="311"/>
        <end position="316"/>
    </location>
</feature>
<feature type="strand" evidence="25">
    <location>
        <begin position="366"/>
        <end position="371"/>
    </location>
</feature>
<feature type="turn" evidence="25">
    <location>
        <begin position="380"/>
        <end position="382"/>
    </location>
</feature>
<feature type="helix" evidence="25">
    <location>
        <begin position="385"/>
        <end position="400"/>
    </location>
</feature>
<feature type="turn" evidence="25">
    <location>
        <begin position="401"/>
        <end position="403"/>
    </location>
</feature>
<feature type="helix" evidence="25">
    <location>
        <begin position="406"/>
        <end position="418"/>
    </location>
</feature>
<feature type="strand" evidence="25">
    <location>
        <begin position="419"/>
        <end position="423"/>
    </location>
</feature>
<feature type="strand" evidence="25">
    <location>
        <begin position="425"/>
        <end position="427"/>
    </location>
</feature>
<feature type="strand" evidence="25">
    <location>
        <begin position="431"/>
        <end position="436"/>
    </location>
</feature>
<reference evidence="15 17" key="1">
    <citation type="journal article" date="1999" name="Proc. Natl. Acad. Sci. U.S.A.">
        <title>DRONC, an ecdysone-inducible Drosophila caspase.</title>
        <authorList>
            <person name="Dorstyn L."/>
            <person name="Colussi P.A."/>
            <person name="Quinn L.M."/>
            <person name="Richardson H."/>
            <person name="Kumar S."/>
        </authorList>
    </citation>
    <scope>NUCLEOTIDE SEQUENCE [MRNA]</scope>
    <scope>FUNCTION</scope>
    <scope>TISSUE SPECIFICITY</scope>
    <scope>DEVELOPMENTAL STAGE</scope>
    <scope>INDUCTION</scope>
    <source>
        <tissue evidence="4">Embryo</tissue>
    </source>
</reference>
<reference evidence="15 20" key="2">
    <citation type="journal article" date="2000" name="EMBO J.">
        <title>The Drosophila caspase DRONC is regulated by DIAP1.</title>
        <authorList>
            <person name="Meier P."/>
            <person name="Silke J."/>
            <person name="Leevers S.J."/>
            <person name="Evan G.I."/>
        </authorList>
    </citation>
    <scope>NUCLEOTIDE SEQUENCE [MRNA]</scope>
    <scope>FUNCTION</scope>
    <scope>INTERACTION WITH DRICE AND DIAP1</scope>
    <source>
        <tissue evidence="5">Embryo</tissue>
    </source>
</reference>
<reference evidence="18" key="3">
    <citation type="journal article" date="2000" name="Science">
        <title>The genome sequence of Drosophila melanogaster.</title>
        <authorList>
            <person name="Adams M.D."/>
            <person name="Celniker S.E."/>
            <person name="Holt R.A."/>
            <person name="Evans C.A."/>
            <person name="Gocayne J.D."/>
            <person name="Amanatides P.G."/>
            <person name="Scherer S.E."/>
            <person name="Li P.W."/>
            <person name="Hoskins R.A."/>
            <person name="Galle R.F."/>
            <person name="George R.A."/>
            <person name="Lewis S.E."/>
            <person name="Richards S."/>
            <person name="Ashburner M."/>
            <person name="Henderson S.N."/>
            <person name="Sutton G.G."/>
            <person name="Wortman J.R."/>
            <person name="Yandell M.D."/>
            <person name="Zhang Q."/>
            <person name="Chen L.X."/>
            <person name="Brandon R.C."/>
            <person name="Rogers Y.-H.C."/>
            <person name="Blazej R.G."/>
            <person name="Champe M."/>
            <person name="Pfeiffer B.D."/>
            <person name="Wan K.H."/>
            <person name="Doyle C."/>
            <person name="Baxter E.G."/>
            <person name="Helt G."/>
            <person name="Nelson C.R."/>
            <person name="Miklos G.L.G."/>
            <person name="Abril J.F."/>
            <person name="Agbayani A."/>
            <person name="An H.-J."/>
            <person name="Andrews-Pfannkoch C."/>
            <person name="Baldwin D."/>
            <person name="Ballew R.M."/>
            <person name="Basu A."/>
            <person name="Baxendale J."/>
            <person name="Bayraktaroglu L."/>
            <person name="Beasley E.M."/>
            <person name="Beeson K.Y."/>
            <person name="Benos P.V."/>
            <person name="Berman B.P."/>
            <person name="Bhandari D."/>
            <person name="Bolshakov S."/>
            <person name="Borkova D."/>
            <person name="Botchan M.R."/>
            <person name="Bouck J."/>
            <person name="Brokstein P."/>
            <person name="Brottier P."/>
            <person name="Burtis K.C."/>
            <person name="Busam D.A."/>
            <person name="Butler H."/>
            <person name="Cadieu E."/>
            <person name="Center A."/>
            <person name="Chandra I."/>
            <person name="Cherry J.M."/>
            <person name="Cawley S."/>
            <person name="Dahlke C."/>
            <person name="Davenport L.B."/>
            <person name="Davies P."/>
            <person name="de Pablos B."/>
            <person name="Delcher A."/>
            <person name="Deng Z."/>
            <person name="Mays A.D."/>
            <person name="Dew I."/>
            <person name="Dietz S.M."/>
            <person name="Dodson K."/>
            <person name="Doup L.E."/>
            <person name="Downes M."/>
            <person name="Dugan-Rocha S."/>
            <person name="Dunkov B.C."/>
            <person name="Dunn P."/>
            <person name="Durbin K.J."/>
            <person name="Evangelista C.C."/>
            <person name="Ferraz C."/>
            <person name="Ferriera S."/>
            <person name="Fleischmann W."/>
            <person name="Fosler C."/>
            <person name="Gabrielian A.E."/>
            <person name="Garg N.S."/>
            <person name="Gelbart W.M."/>
            <person name="Glasser K."/>
            <person name="Glodek A."/>
            <person name="Gong F."/>
            <person name="Gorrell J.H."/>
            <person name="Gu Z."/>
            <person name="Guan P."/>
            <person name="Harris M."/>
            <person name="Harris N.L."/>
            <person name="Harvey D.A."/>
            <person name="Heiman T.J."/>
            <person name="Hernandez J.R."/>
            <person name="Houck J."/>
            <person name="Hostin D."/>
            <person name="Houston K.A."/>
            <person name="Howland T.J."/>
            <person name="Wei M.-H."/>
            <person name="Ibegwam C."/>
            <person name="Jalali M."/>
            <person name="Kalush F."/>
            <person name="Karpen G.H."/>
            <person name="Ke Z."/>
            <person name="Kennison J.A."/>
            <person name="Ketchum K.A."/>
            <person name="Kimmel B.E."/>
            <person name="Kodira C.D."/>
            <person name="Kraft C.L."/>
            <person name="Kravitz S."/>
            <person name="Kulp D."/>
            <person name="Lai Z."/>
            <person name="Lasko P."/>
            <person name="Lei Y."/>
            <person name="Levitsky A.A."/>
            <person name="Li J.H."/>
            <person name="Li Z."/>
            <person name="Liang Y."/>
            <person name="Lin X."/>
            <person name="Liu X."/>
            <person name="Mattei B."/>
            <person name="McIntosh T.C."/>
            <person name="McLeod M.P."/>
            <person name="McPherson D."/>
            <person name="Merkulov G."/>
            <person name="Milshina N.V."/>
            <person name="Mobarry C."/>
            <person name="Morris J."/>
            <person name="Moshrefi A."/>
            <person name="Mount S.M."/>
            <person name="Moy M."/>
            <person name="Murphy B."/>
            <person name="Murphy L."/>
            <person name="Muzny D.M."/>
            <person name="Nelson D.L."/>
            <person name="Nelson D.R."/>
            <person name="Nelson K.A."/>
            <person name="Nixon K."/>
            <person name="Nusskern D.R."/>
            <person name="Pacleb J.M."/>
            <person name="Palazzolo M."/>
            <person name="Pittman G.S."/>
            <person name="Pan S."/>
            <person name="Pollard J."/>
            <person name="Puri V."/>
            <person name="Reese M.G."/>
            <person name="Reinert K."/>
            <person name="Remington K."/>
            <person name="Saunders R.D.C."/>
            <person name="Scheeler F."/>
            <person name="Shen H."/>
            <person name="Shue B.C."/>
            <person name="Siden-Kiamos I."/>
            <person name="Simpson M."/>
            <person name="Skupski M.P."/>
            <person name="Smith T.J."/>
            <person name="Spier E."/>
            <person name="Spradling A.C."/>
            <person name="Stapleton M."/>
            <person name="Strong R."/>
            <person name="Sun E."/>
            <person name="Svirskas R."/>
            <person name="Tector C."/>
            <person name="Turner R."/>
            <person name="Venter E."/>
            <person name="Wang A.H."/>
            <person name="Wang X."/>
            <person name="Wang Z.-Y."/>
            <person name="Wassarman D.A."/>
            <person name="Weinstock G.M."/>
            <person name="Weissenbach J."/>
            <person name="Williams S.M."/>
            <person name="Woodage T."/>
            <person name="Worley K.C."/>
            <person name="Wu D."/>
            <person name="Yang S."/>
            <person name="Yao Q.A."/>
            <person name="Ye J."/>
            <person name="Yeh R.-F."/>
            <person name="Zaveri J.S."/>
            <person name="Zhan M."/>
            <person name="Zhang G."/>
            <person name="Zhao Q."/>
            <person name="Zheng L."/>
            <person name="Zheng X.H."/>
            <person name="Zhong F.N."/>
            <person name="Zhong W."/>
            <person name="Zhou X."/>
            <person name="Zhu S.C."/>
            <person name="Zhu X."/>
            <person name="Smith H.O."/>
            <person name="Gibbs R.A."/>
            <person name="Myers E.W."/>
            <person name="Rubin G.M."/>
            <person name="Venter J.C."/>
        </authorList>
    </citation>
    <scope>NUCLEOTIDE SEQUENCE [LARGE SCALE GENOMIC DNA]</scope>
    <source>
        <strain evidence="6">Berkeley</strain>
    </source>
</reference>
<reference evidence="15 18" key="4">
    <citation type="journal article" date="2002" name="Genome Biol.">
        <title>Annotation of the Drosophila melanogaster euchromatic genome: a systematic review.</title>
        <authorList>
            <person name="Misra S."/>
            <person name="Crosby M.A."/>
            <person name="Mungall C.J."/>
            <person name="Matthews B.B."/>
            <person name="Campbell K.S."/>
            <person name="Hradecky P."/>
            <person name="Huang Y."/>
            <person name="Kaminker J.S."/>
            <person name="Millburn G.H."/>
            <person name="Prochnik S.E."/>
            <person name="Smith C.D."/>
            <person name="Tupy J.L."/>
            <person name="Whitfield E.J."/>
            <person name="Bayraktaroglu L."/>
            <person name="Berman B.P."/>
            <person name="Bettencourt B.R."/>
            <person name="Celniker S.E."/>
            <person name="de Grey A.D.N.J."/>
            <person name="Drysdale R.A."/>
            <person name="Harris N.L."/>
            <person name="Richter J."/>
            <person name="Russo S."/>
            <person name="Schroeder A.J."/>
            <person name="Shu S.Q."/>
            <person name="Stapleton M."/>
            <person name="Yamada C."/>
            <person name="Ashburner M."/>
            <person name="Gelbart W.M."/>
            <person name="Rubin G.M."/>
            <person name="Lewis S.E."/>
        </authorList>
    </citation>
    <scope>GENOME REANNOTATION</scope>
    <source>
        <strain>Berkeley</strain>
    </source>
</reference>
<reference evidence="19" key="5">
    <citation type="journal article" date="2002" name="Genome Biol.">
        <title>A Drosophila full-length cDNA resource.</title>
        <authorList>
            <person name="Stapleton M."/>
            <person name="Carlson J.W."/>
            <person name="Brokstein P."/>
            <person name="Yu C."/>
            <person name="Champe M."/>
            <person name="George R.A."/>
            <person name="Guarin H."/>
            <person name="Kronmiller B."/>
            <person name="Pacleb J.M."/>
            <person name="Park S."/>
            <person name="Wan K.H."/>
            <person name="Rubin G.M."/>
            <person name="Celniker S.E."/>
        </authorList>
    </citation>
    <scope>NUCLEOTIDE SEQUENCE [LARGE SCALE MRNA]</scope>
    <source>
        <strain evidence="9">Berkeley</strain>
        <tissue evidence="9">Larva</tissue>
        <tissue evidence="9">Pupae</tissue>
    </source>
</reference>
<reference key="6">
    <citation type="journal article" date="2000" name="J. Biol. Chem.">
        <title>An essential role for the caspase dronc in developmentally programmed cell death in Drosophila.</title>
        <authorList>
            <person name="Quinn L.M."/>
            <person name="Dorstyn L."/>
            <person name="Mills K."/>
            <person name="Colussi P.A."/>
            <person name="Chen P."/>
            <person name="Coombe M."/>
            <person name="Abrams J."/>
            <person name="Kumar S."/>
            <person name="Richardson H."/>
        </authorList>
    </citation>
    <scope>FUNCTION</scope>
    <scope>INTERACTION WITH DIAP1 AND DARK</scope>
    <scope>MUTAGENESIS OF CYS-318</scope>
</reference>
<reference key="7">
    <citation type="journal article" date="2002" name="Nat. Cell Biol.">
        <title>The DIAP1 RING finger mediates ubiquitination of Dronc and is indispensable for regulating apoptosis.</title>
        <authorList>
            <person name="Wilson R."/>
            <person name="Goyal L."/>
            <person name="Ditzel M."/>
            <person name="Zachariou A."/>
            <person name="Baker D.A."/>
            <person name="Agapite J."/>
            <person name="Steller H."/>
            <person name="Meier P."/>
        </authorList>
    </citation>
    <scope>UBIQUITINATION AND SUBSEQUENT DEGRADATION</scope>
</reference>
<reference key="8">
    <citation type="journal article" date="2011" name="Structure">
        <title>Structure of the Drosophila apoptosome at 6.9a resolution.</title>
        <authorList>
            <person name="Yuan S."/>
            <person name="Yu X."/>
            <person name="Topf M."/>
            <person name="Dorstyn L."/>
            <person name="Kumar S."/>
            <person name="Ludtke S.J."/>
            <person name="Akey C.W."/>
        </authorList>
    </citation>
    <scope>FUNCTION</scope>
    <scope>CATALYTIC ACTIVITY</scope>
    <scope>ACTIVITY REGULATION</scope>
    <scope>INTERACTION WITH DARK</scope>
</reference>
<reference key="9">
    <citation type="journal article" date="2024" name="Proc. Natl. Acad. Sci. U.S.A.">
        <title>Dark and Dronc activation in Drosophila melanogaster.</title>
        <authorList>
            <person name="Tian L."/>
            <person name="Li Y."/>
            <person name="Shi Y."/>
        </authorList>
    </citation>
    <scope>ACTIVITY REGULATION</scope>
    <scope>INTERACTION WITH DARK</scope>
</reference>
<reference evidence="23" key="10">
    <citation type="journal article" date="2003" name="Nat. Struct. Biol.">
        <title>Molecular mechanism of Reaper-Grim-Hid-mediated suppression of DIAP1-dependent Dronc ubiquitination.</title>
        <authorList>
            <person name="Chai J."/>
            <person name="Yan N."/>
            <person name="Huh J.R."/>
            <person name="Wu J.-W."/>
            <person name="Li W."/>
            <person name="Hay B.A."/>
            <person name="Shi Y."/>
        </authorList>
    </citation>
    <scope>X-RAY CRYSTALLOGRAPHY (2.1 ANGSTROMS) OF 114-125 IN COMPLEX WITH DIAP1</scope>
    <scope>FUNCTION</scope>
    <scope>MUTAGENESIS OF PHE-118</scope>
</reference>
<reference evidence="24" key="11">
    <citation type="journal article" date="2015" name="Genes Dev.">
        <title>Structure of the apoptosome: mechanistic insights into activation of an initiator caspase from Drosophila.</title>
        <authorList>
            <person name="Pang Y."/>
            <person name="Bai X.C."/>
            <person name="Yan C."/>
            <person name="Hao Q."/>
            <person name="Chen Z."/>
            <person name="Wang J.W."/>
            <person name="Scheres S.H."/>
            <person name="Shi Y."/>
        </authorList>
    </citation>
    <scope>STRUCTURE BY ELECTRON MICROSCOPY (4.00 ANGSTROMS) OF 1-130 IN COMPLEX WITH DARK</scope>
    <scope>FUNCTION</scope>
    <scope>CATALYTIC ACTIVITY</scope>
    <scope>ACTIVITY REGULATION</scope>
    <scope>INTERACTION WITH DARK</scope>
    <scope>MUTAGENESIS OF 55-LEU--VAL-67 AND 81-GLN-ARG-82</scope>
</reference>
<gene>
    <name evidence="14 21" type="primary">Dronc</name>
    <name evidence="18" type="synonym">Nc</name>
    <name evidence="21" type="ORF">CG8091</name>
</gene>
<dbReference type="EC" id="3.4.22.62" evidence="11 12"/>
<dbReference type="EMBL" id="AF104357">
    <property type="protein sequence ID" value="AAD26625.1"/>
    <property type="molecule type" value="mRNA"/>
</dbReference>
<dbReference type="EMBL" id="AJ242796">
    <property type="protein sequence ID" value="CAB53565.1"/>
    <property type="molecule type" value="mRNA"/>
</dbReference>
<dbReference type="EMBL" id="AE014296">
    <property type="protein sequence ID" value="AAF50180.1"/>
    <property type="molecule type" value="Genomic_DNA"/>
</dbReference>
<dbReference type="EMBL" id="AY058747">
    <property type="protein sequence ID" value="AAL13976.1"/>
    <property type="molecule type" value="mRNA"/>
</dbReference>
<dbReference type="RefSeq" id="NP_524017.1">
    <property type="nucleotide sequence ID" value="NM_079293.4"/>
</dbReference>
<dbReference type="PDB" id="1Q4Q">
    <property type="method" value="X-ray"/>
    <property type="resolution" value="2.10 A"/>
    <property type="chains" value="K/L/M/N/O/P/Q/R/S/T=114-125"/>
</dbReference>
<dbReference type="PDB" id="2FP3">
    <property type="method" value="X-ray"/>
    <property type="resolution" value="2.50 A"/>
    <property type="chains" value="A=136-450"/>
</dbReference>
<dbReference type="PDB" id="3J9K">
    <property type="method" value="EM"/>
    <property type="resolution" value="4.10 A"/>
    <property type="chains" value="B/D/F/H/J/L/N/P/R/T/V/X/Z/b/d/f=1-130"/>
</dbReference>
<dbReference type="PDB" id="8Y6Q">
    <property type="method" value="EM"/>
    <property type="resolution" value="7.00 A"/>
    <property type="chains" value="A/B/C/D/E/F/G/N=10-111"/>
</dbReference>
<dbReference type="PDBsum" id="1Q4Q"/>
<dbReference type="PDBsum" id="2FP3"/>
<dbReference type="PDBsum" id="3J9K"/>
<dbReference type="PDBsum" id="8Y6Q"/>
<dbReference type="EMDB" id="EMD-38995"/>
<dbReference type="SMR" id="Q9XYF4"/>
<dbReference type="BioGRID" id="64560">
    <property type="interactions" value="68"/>
</dbReference>
<dbReference type="ComplexPortal" id="CPX-2729">
    <property type="entry name" value="Apoptosome"/>
</dbReference>
<dbReference type="DIP" id="DIP-31484N"/>
<dbReference type="FunCoup" id="Q9XYF4">
    <property type="interactions" value="140"/>
</dbReference>
<dbReference type="IntAct" id="Q9XYF4">
    <property type="interactions" value="9"/>
</dbReference>
<dbReference type="MINT" id="Q9XYF4"/>
<dbReference type="STRING" id="7227.FBpp0076076"/>
<dbReference type="MEROPS" id="C14.019"/>
<dbReference type="iPTMnet" id="Q9XYF4"/>
<dbReference type="PaxDb" id="7227-FBpp0076076"/>
<dbReference type="EnsemblMetazoa" id="FBtr0076347">
    <property type="protein sequence ID" value="FBpp0076076"/>
    <property type="gene ID" value="FBgn0026404"/>
</dbReference>
<dbReference type="GeneID" id="39173"/>
<dbReference type="KEGG" id="dme:Dmel_CG8091"/>
<dbReference type="AGR" id="FB:FBgn0026404"/>
<dbReference type="CTD" id="39173"/>
<dbReference type="FlyBase" id="FBgn0026404">
    <property type="gene designation" value="Dronc"/>
</dbReference>
<dbReference type="VEuPathDB" id="VectorBase:FBgn0026404"/>
<dbReference type="eggNOG" id="KOG3573">
    <property type="taxonomic scope" value="Eukaryota"/>
</dbReference>
<dbReference type="GeneTree" id="ENSGT00940000174288"/>
<dbReference type="HOGENOM" id="CLU_036904_5_2_1"/>
<dbReference type="InParanoid" id="Q9XYF4"/>
<dbReference type="OMA" id="VCYANTP"/>
<dbReference type="OrthoDB" id="6097640at2759"/>
<dbReference type="PhylomeDB" id="Q9XYF4"/>
<dbReference type="Reactome" id="R-DME-6803207">
    <property type="pathway name" value="TP53 Regulates Transcription of Caspase Activators and Caspases"/>
</dbReference>
<dbReference type="SignaLink" id="Q9XYF4"/>
<dbReference type="BioGRID-ORCS" id="39173">
    <property type="hits" value="0 hits in 3 CRISPR screens"/>
</dbReference>
<dbReference type="EvolutionaryTrace" id="Q9XYF4"/>
<dbReference type="GenomeRNAi" id="39173"/>
<dbReference type="PRO" id="PR:Q9XYF4"/>
<dbReference type="Proteomes" id="UP000000803">
    <property type="component" value="Chromosome 3L"/>
</dbReference>
<dbReference type="Bgee" id="FBgn0026404">
    <property type="expression patterns" value="Expressed in embryonic/larval hemocyte (Drosophila) and 63 other cell types or tissues"/>
</dbReference>
<dbReference type="GO" id="GO:0043293">
    <property type="term" value="C:apoptosome"/>
    <property type="evidence" value="ECO:0000314"/>
    <property type="project" value="FlyBase"/>
</dbReference>
<dbReference type="GO" id="GO:0005737">
    <property type="term" value="C:cytoplasm"/>
    <property type="evidence" value="ECO:0000314"/>
    <property type="project" value="FlyBase"/>
</dbReference>
<dbReference type="GO" id="GO:0005634">
    <property type="term" value="C:nucleus"/>
    <property type="evidence" value="ECO:0000314"/>
    <property type="project" value="FlyBase"/>
</dbReference>
<dbReference type="GO" id="GO:0005886">
    <property type="term" value="C:plasma membrane"/>
    <property type="evidence" value="ECO:0000314"/>
    <property type="project" value="FlyBase"/>
</dbReference>
<dbReference type="GO" id="GO:0050700">
    <property type="term" value="F:CARD domain binding"/>
    <property type="evidence" value="ECO:0000255"/>
    <property type="project" value="FlyBase"/>
</dbReference>
<dbReference type="GO" id="GO:0004197">
    <property type="term" value="F:cysteine-type endopeptidase activity"/>
    <property type="evidence" value="ECO:0000314"/>
    <property type="project" value="FlyBase"/>
</dbReference>
<dbReference type="GO" id="GO:0042803">
    <property type="term" value="F:protein homodimerization activity"/>
    <property type="evidence" value="ECO:0000314"/>
    <property type="project" value="FlyBase"/>
</dbReference>
<dbReference type="GO" id="GO:0006915">
    <property type="term" value="P:apoptotic process"/>
    <property type="evidence" value="ECO:0000314"/>
    <property type="project" value="UniProtKB"/>
</dbReference>
<dbReference type="GO" id="GO:0007417">
    <property type="term" value="P:central nervous system development"/>
    <property type="evidence" value="ECO:0000315"/>
    <property type="project" value="FlyBase"/>
</dbReference>
<dbReference type="GO" id="GO:0022416">
    <property type="term" value="P:chaeta development"/>
    <property type="evidence" value="ECO:0000315"/>
    <property type="project" value="FlyBase"/>
</dbReference>
<dbReference type="GO" id="GO:0048749">
    <property type="term" value="P:compound eye development"/>
    <property type="evidence" value="ECO:0000315"/>
    <property type="project" value="FlyBase"/>
</dbReference>
<dbReference type="GO" id="GO:0046667">
    <property type="term" value="P:compound eye retinal cell programmed cell death"/>
    <property type="evidence" value="ECO:0000315"/>
    <property type="project" value="FlyBase"/>
</dbReference>
<dbReference type="GO" id="GO:0048813">
    <property type="term" value="P:dendrite morphogenesis"/>
    <property type="evidence" value="ECO:0000315"/>
    <property type="project" value="FlyBase"/>
</dbReference>
<dbReference type="GO" id="GO:0008340">
    <property type="term" value="P:determination of adult lifespan"/>
    <property type="evidence" value="ECO:0000315"/>
    <property type="project" value="FlyBase"/>
</dbReference>
<dbReference type="GO" id="GO:0035234">
    <property type="term" value="P:ectopic germ cell programmed cell death"/>
    <property type="evidence" value="ECO:0000315"/>
    <property type="project" value="FlyBase"/>
</dbReference>
<dbReference type="GO" id="GO:0097194">
    <property type="term" value="P:execution phase of apoptosis"/>
    <property type="evidence" value="ECO:0000314"/>
    <property type="project" value="FlyBase"/>
</dbReference>
<dbReference type="GO" id="GO:0008258">
    <property type="term" value="P:head involution"/>
    <property type="evidence" value="ECO:0000315"/>
    <property type="project" value="FlyBase"/>
</dbReference>
<dbReference type="GO" id="GO:0007516">
    <property type="term" value="P:hemocyte development"/>
    <property type="evidence" value="ECO:0000315"/>
    <property type="project" value="FlyBase"/>
</dbReference>
<dbReference type="GO" id="GO:0035006">
    <property type="term" value="P:melanization defense response"/>
    <property type="evidence" value="ECO:0000315"/>
    <property type="project" value="FlyBase"/>
</dbReference>
<dbReference type="GO" id="GO:0007552">
    <property type="term" value="P:metamorphosis"/>
    <property type="evidence" value="ECO:0000304"/>
    <property type="project" value="FlyBase"/>
</dbReference>
<dbReference type="GO" id="GO:0008285">
    <property type="term" value="P:negative regulation of cell population proliferation"/>
    <property type="evidence" value="ECO:0000314"/>
    <property type="project" value="FlyBase"/>
</dbReference>
<dbReference type="GO" id="GO:0016322">
    <property type="term" value="P:neuron remodeling"/>
    <property type="evidence" value="ECO:0000315"/>
    <property type="project" value="FlyBase"/>
</dbReference>
<dbReference type="GO" id="GO:0045476">
    <property type="term" value="P:nurse cell apoptotic process"/>
    <property type="evidence" value="ECO:0000316"/>
    <property type="project" value="FlyBase"/>
</dbReference>
<dbReference type="GO" id="GO:2001235">
    <property type="term" value="P:positive regulation of apoptotic signaling pathway"/>
    <property type="evidence" value="ECO:0000318"/>
    <property type="project" value="GO_Central"/>
</dbReference>
<dbReference type="GO" id="GO:0012501">
    <property type="term" value="P:programmed cell death"/>
    <property type="evidence" value="ECO:0000314"/>
    <property type="project" value="FlyBase"/>
</dbReference>
<dbReference type="GO" id="GO:0010623">
    <property type="term" value="P:programmed cell death involved in cell development"/>
    <property type="evidence" value="ECO:0000315"/>
    <property type="project" value="FlyBase"/>
</dbReference>
<dbReference type="GO" id="GO:0097300">
    <property type="term" value="P:programmed necrotic cell death"/>
    <property type="evidence" value="ECO:0000315"/>
    <property type="project" value="FlyBase"/>
</dbReference>
<dbReference type="GO" id="GO:0016540">
    <property type="term" value="P:protein autoprocessing"/>
    <property type="evidence" value="ECO:0000314"/>
    <property type="project" value="FlyBase"/>
</dbReference>
<dbReference type="GO" id="GO:0035070">
    <property type="term" value="P:salivary gland histolysis"/>
    <property type="evidence" value="ECO:0000315"/>
    <property type="project" value="FlyBase"/>
</dbReference>
<dbReference type="GO" id="GO:0007291">
    <property type="term" value="P:sperm individualization"/>
    <property type="evidence" value="ECO:0000315"/>
    <property type="project" value="FlyBase"/>
</dbReference>
<dbReference type="GO" id="GO:0031638">
    <property type="term" value="P:zymogen activation"/>
    <property type="evidence" value="ECO:0000314"/>
    <property type="project" value="FlyBase"/>
</dbReference>
<dbReference type="CDD" id="cd01671">
    <property type="entry name" value="CARD"/>
    <property type="match status" value="1"/>
</dbReference>
<dbReference type="CDD" id="cd00032">
    <property type="entry name" value="CASc"/>
    <property type="match status" value="1"/>
</dbReference>
<dbReference type="FunFam" id="1.10.533.10:FF:000114">
    <property type="entry name" value="Caspase Dronc"/>
    <property type="match status" value="1"/>
</dbReference>
<dbReference type="Gene3D" id="3.40.50.1460">
    <property type="match status" value="1"/>
</dbReference>
<dbReference type="Gene3D" id="1.10.533.10">
    <property type="entry name" value="Death Domain, Fas"/>
    <property type="match status" value="1"/>
</dbReference>
<dbReference type="InterPro" id="IPR029030">
    <property type="entry name" value="Caspase-like_dom_sf"/>
</dbReference>
<dbReference type="InterPro" id="IPR033139">
    <property type="entry name" value="Caspase_cys_AS"/>
</dbReference>
<dbReference type="InterPro" id="IPR011029">
    <property type="entry name" value="DEATH-like_dom_sf"/>
</dbReference>
<dbReference type="InterPro" id="IPR002398">
    <property type="entry name" value="Pept_C14"/>
</dbReference>
<dbReference type="InterPro" id="IPR011600">
    <property type="entry name" value="Pept_C14_caspase"/>
</dbReference>
<dbReference type="InterPro" id="IPR002138">
    <property type="entry name" value="Pept_C14_p10"/>
</dbReference>
<dbReference type="InterPro" id="IPR001309">
    <property type="entry name" value="Pept_C14_p20"/>
</dbReference>
<dbReference type="InterPro" id="IPR015917">
    <property type="entry name" value="Pept_C14A"/>
</dbReference>
<dbReference type="PANTHER" id="PTHR47901">
    <property type="entry name" value="CASPASE RECRUITMENT DOMAIN-CONTAINING PROTEIN 18"/>
    <property type="match status" value="1"/>
</dbReference>
<dbReference type="PANTHER" id="PTHR47901:SF8">
    <property type="entry name" value="CASPASE-3"/>
    <property type="match status" value="1"/>
</dbReference>
<dbReference type="Pfam" id="PF00656">
    <property type="entry name" value="Peptidase_C14"/>
    <property type="match status" value="1"/>
</dbReference>
<dbReference type="PIRSF" id="PIRSF038001">
    <property type="entry name" value="Caspase_ICE"/>
    <property type="match status" value="1"/>
</dbReference>
<dbReference type="PRINTS" id="PR00376">
    <property type="entry name" value="IL1BCENZYME"/>
</dbReference>
<dbReference type="SMART" id="SM00115">
    <property type="entry name" value="CASc"/>
    <property type="match status" value="1"/>
</dbReference>
<dbReference type="SUPFAM" id="SSF52129">
    <property type="entry name" value="Caspase-like"/>
    <property type="match status" value="1"/>
</dbReference>
<dbReference type="SUPFAM" id="SSF47986">
    <property type="entry name" value="DEATH domain"/>
    <property type="match status" value="1"/>
</dbReference>
<dbReference type="PROSITE" id="PS01122">
    <property type="entry name" value="CASPASE_CYS"/>
    <property type="match status" value="1"/>
</dbReference>
<dbReference type="PROSITE" id="PS50207">
    <property type="entry name" value="CASPASE_P10"/>
    <property type="match status" value="1"/>
</dbReference>
<dbReference type="PROSITE" id="PS50208">
    <property type="entry name" value="CASPASE_P20"/>
    <property type="match status" value="1"/>
</dbReference>